<evidence type="ECO:0000255" key="1">
    <source>
        <dbReference type="PROSITE-ProRule" id="PRU00042"/>
    </source>
</evidence>
<evidence type="ECO:0000256" key="2">
    <source>
        <dbReference type="SAM" id="MobiDB-lite"/>
    </source>
</evidence>
<evidence type="ECO:0000269" key="3">
    <source>
    </source>
</evidence>
<evidence type="ECO:0000269" key="4">
    <source>
    </source>
</evidence>
<evidence type="ECO:0000269" key="5">
    <source>
    </source>
</evidence>
<evidence type="ECO:0000269" key="6">
    <source>
    </source>
</evidence>
<evidence type="ECO:0000269" key="7">
    <source>
    </source>
</evidence>
<evidence type="ECO:0000269" key="8">
    <source>
    </source>
</evidence>
<evidence type="ECO:0000269" key="9">
    <source>
    </source>
</evidence>
<evidence type="ECO:0000269" key="10">
    <source>
    </source>
</evidence>
<evidence type="ECO:0000269" key="11">
    <source>
    </source>
</evidence>
<evidence type="ECO:0000303" key="12">
    <source>
    </source>
</evidence>
<evidence type="ECO:0000303" key="13">
    <source>
    </source>
</evidence>
<evidence type="ECO:0000303" key="14">
    <source>
    </source>
</evidence>
<evidence type="ECO:0000303" key="15">
    <source>
    </source>
</evidence>
<evidence type="ECO:0000305" key="16"/>
<evidence type="ECO:0000312" key="17">
    <source>
        <dbReference type="EMBL" id="AFR92293.1"/>
    </source>
</evidence>
<evidence type="ECO:0000312" key="18">
    <source>
        <dbReference type="Proteomes" id="UP000010091"/>
    </source>
</evidence>
<name>CRZ1_CRYNH</name>
<gene>
    <name evidence="13" type="primary">CRZ1</name>
    <name evidence="12" type="synonym">SP1</name>
    <name evidence="17" type="ORF">CNAG_00156</name>
</gene>
<feature type="chain" id="PRO_0000451159" description="Transcriptional regulator CRZ1">
    <location>
        <begin position="1"/>
        <end position="1094"/>
    </location>
</feature>
<feature type="zinc finger region" description="C2H2-type 1" evidence="1">
    <location>
        <begin position="944"/>
        <end position="968"/>
    </location>
</feature>
<feature type="zinc finger region" description="C2H2-type 2; degenerate" evidence="1">
    <location>
        <begin position="1007"/>
        <end position="1029"/>
    </location>
</feature>
<feature type="region of interest" description="Disordered" evidence="2">
    <location>
        <begin position="1"/>
        <end position="29"/>
    </location>
</feature>
<feature type="region of interest" description="Disordered" evidence="2">
    <location>
        <begin position="44"/>
        <end position="81"/>
    </location>
</feature>
<feature type="region of interest" description="Disordered" evidence="2">
    <location>
        <begin position="93"/>
        <end position="428"/>
    </location>
</feature>
<feature type="region of interest" description="Disordered" evidence="2">
    <location>
        <begin position="477"/>
        <end position="519"/>
    </location>
</feature>
<feature type="region of interest" description="Disordered" evidence="2">
    <location>
        <begin position="835"/>
        <end position="888"/>
    </location>
</feature>
<feature type="region of interest" description="Disordered" evidence="2">
    <location>
        <begin position="1037"/>
        <end position="1094"/>
    </location>
</feature>
<feature type="compositionally biased region" description="Basic and acidic residues" evidence="2">
    <location>
        <begin position="60"/>
        <end position="78"/>
    </location>
</feature>
<feature type="compositionally biased region" description="Basic and acidic residues" evidence="2">
    <location>
        <begin position="94"/>
        <end position="103"/>
    </location>
</feature>
<feature type="compositionally biased region" description="Low complexity" evidence="2">
    <location>
        <begin position="148"/>
        <end position="159"/>
    </location>
</feature>
<feature type="compositionally biased region" description="Polar residues" evidence="2">
    <location>
        <begin position="166"/>
        <end position="187"/>
    </location>
</feature>
<feature type="compositionally biased region" description="Polar residues" evidence="2">
    <location>
        <begin position="201"/>
        <end position="217"/>
    </location>
</feature>
<feature type="compositionally biased region" description="Low complexity" evidence="2">
    <location>
        <begin position="228"/>
        <end position="241"/>
    </location>
</feature>
<feature type="compositionally biased region" description="Low complexity" evidence="2">
    <location>
        <begin position="252"/>
        <end position="262"/>
    </location>
</feature>
<feature type="compositionally biased region" description="Polar residues" evidence="2">
    <location>
        <begin position="286"/>
        <end position="324"/>
    </location>
</feature>
<feature type="compositionally biased region" description="Low complexity" evidence="2">
    <location>
        <begin position="325"/>
        <end position="342"/>
    </location>
</feature>
<feature type="compositionally biased region" description="Polar residues" evidence="2">
    <location>
        <begin position="343"/>
        <end position="379"/>
    </location>
</feature>
<feature type="compositionally biased region" description="Polar residues" evidence="2">
    <location>
        <begin position="396"/>
        <end position="412"/>
    </location>
</feature>
<feature type="compositionally biased region" description="Low complexity" evidence="2">
    <location>
        <begin position="477"/>
        <end position="493"/>
    </location>
</feature>
<feature type="compositionally biased region" description="Polar residues" evidence="2">
    <location>
        <begin position="507"/>
        <end position="519"/>
    </location>
</feature>
<feature type="compositionally biased region" description="Low complexity" evidence="2">
    <location>
        <begin position="858"/>
        <end position="881"/>
    </location>
</feature>
<feature type="modified residue" description="Phosphoserine" evidence="6">
    <location>
        <position position="103"/>
    </location>
</feature>
<feature type="modified residue" description="Phosphoserine" evidence="6">
    <location>
        <position position="288"/>
    </location>
</feature>
<feature type="modified residue" description="Phosphoserine" evidence="6">
    <location>
        <position position="329"/>
    </location>
</feature>
<feature type="modified residue" description="Phosphoserine" evidence="6">
    <location>
        <position position="508"/>
    </location>
</feature>
<feature type="modified residue" description="Phosphoserine" evidence="6">
    <location>
        <position position="569"/>
    </location>
</feature>
<feature type="modified residue" description="Phosphoserine" evidence="6">
    <location>
        <position position="765"/>
    </location>
</feature>
<feature type="modified residue" description="Phosphoserine" evidence="6">
    <location>
        <position position="810"/>
    </location>
</feature>
<feature type="mutagenesis site" description="Increases CRZ1 localization to the nucleus." evidence="6">
    <original>S</original>
    <variation>A</variation>
    <location>
        <position position="288"/>
    </location>
</feature>
<feature type="mutagenesis site" description="Abolishes nuclear localization during heat stress and confers sensitivity to high temperature, Congo Red and sodium dodecyl sulfate." evidence="7">
    <location>
        <begin position="451"/>
        <end position="456"/>
    </location>
</feature>
<feature type="mutagenesis site" description="Increases CRZ1 localization to the nucleus." evidence="6">
    <original>S</original>
    <variation>A</variation>
    <location>
        <position position="508"/>
    </location>
</feature>
<keyword id="KW-0010">Activator</keyword>
<keyword id="KW-0963">Cytoplasm</keyword>
<keyword id="KW-0238">DNA-binding</keyword>
<keyword id="KW-0479">Metal-binding</keyword>
<keyword id="KW-0539">Nucleus</keyword>
<keyword id="KW-0597">Phosphoprotein</keyword>
<keyword id="KW-0677">Repeat</keyword>
<keyword id="KW-0804">Transcription</keyword>
<keyword id="KW-0805">Transcription regulation</keyword>
<keyword id="KW-0843">Virulence</keyword>
<keyword id="KW-0862">Zinc</keyword>
<keyword id="KW-0863">Zinc-finger</keyword>
<protein>
    <recommendedName>
        <fullName evidence="13">Transcriptional regulator CRZ1</fullName>
    </recommendedName>
</protein>
<reference evidence="18" key="1">
    <citation type="journal article" date="2014" name="PLoS Genet.">
        <title>Analysis of the genome and transcriptome of Cryptococcus neoformans var. grubii reveals complex RNA expression and microevolution leading to virulence attenuation.</title>
        <authorList>
            <person name="Janbon G."/>
            <person name="Ormerod K.L."/>
            <person name="Paulet D."/>
            <person name="Byrnes E.J. III"/>
            <person name="Yadav V."/>
            <person name="Chatterjee G."/>
            <person name="Mullapudi N."/>
            <person name="Hon C.-C."/>
            <person name="Billmyre R.B."/>
            <person name="Brunel F."/>
            <person name="Bahn Y.-S."/>
            <person name="Chen W."/>
            <person name="Chen Y."/>
            <person name="Chow E.W.L."/>
            <person name="Coppee J.-Y."/>
            <person name="Floyd-Averette A."/>
            <person name="Gaillardin C."/>
            <person name="Gerik K.J."/>
            <person name="Goldberg J."/>
            <person name="Gonzalez-Hilarion S."/>
            <person name="Gujja S."/>
            <person name="Hamlin J.L."/>
            <person name="Hsueh Y.-P."/>
            <person name="Ianiri G."/>
            <person name="Jones S."/>
            <person name="Kodira C.D."/>
            <person name="Kozubowski L."/>
            <person name="Lam W."/>
            <person name="Marra M."/>
            <person name="Mesner L.D."/>
            <person name="Mieczkowski P.A."/>
            <person name="Moyrand F."/>
            <person name="Nielsen K."/>
            <person name="Proux C."/>
            <person name="Rossignol T."/>
            <person name="Schein J.E."/>
            <person name="Sun S."/>
            <person name="Wollschlaeger C."/>
            <person name="Wood I.A."/>
            <person name="Zeng Q."/>
            <person name="Neuveglise C."/>
            <person name="Newlon C.S."/>
            <person name="Perfect J.R."/>
            <person name="Lodge J.K."/>
            <person name="Idnurm A."/>
            <person name="Stajich J.E."/>
            <person name="Kronstad J.W."/>
            <person name="Sanyal K."/>
            <person name="Heitman J."/>
            <person name="Fraser J.A."/>
            <person name="Cuomo C.A."/>
            <person name="Dietrich F.S."/>
        </authorList>
    </citation>
    <scope>NUCLEOTIDE SEQUENCE [LARGE SCALE GENOMIC DNA]</scope>
    <source>
        <strain>H99 / ATCC 208821 / CBS 10515 / FGSC 9487</strain>
    </source>
</reference>
<reference evidence="16" key="2">
    <citation type="journal article" date="2011" name="J. Biol. Chem.">
        <title>A novel specificity protein 1 (SP1)-like gene regulating protein kinase C-1 (Pkc1)-dependent cell wall integrity and virulence factors in Cryptococcus neoformans.</title>
        <authorList>
            <person name="Adler A."/>
            <person name="Park Y.D."/>
            <person name="Larsen P."/>
            <person name="Nagarajan V."/>
            <person name="Wollenberg K."/>
            <person name="Qiu J."/>
            <person name="Myers T.G."/>
            <person name="Williamson P.R."/>
        </authorList>
    </citation>
    <scope>SUBCELLULAR LOCATION</scope>
    <scope>INDUCTION BY GLUCOSE STARVATION</scope>
    <scope>PHOSPHORYLATION</scope>
    <scope>DISRUPTION PHENOTYPE</scope>
</reference>
<reference evidence="16" key="3">
    <citation type="journal article" date="2012" name="PLoS ONE">
        <title>The Crz1/Sp1 transcription factor of Cryptococcus neoformans is activated by calcineurin and regulates cell wall integrity.</title>
        <authorList>
            <person name="Lev S."/>
            <person name="Desmarini D."/>
            <person name="Chayakulkeeree M."/>
            <person name="Sorrell T.C."/>
            <person name="Djordjevic J.T."/>
        </authorList>
    </citation>
    <scope>FUNCTION</scope>
    <scope>SUBCELLULAR LOCATION</scope>
    <scope>DISRUPTION PHENOTYPE</scope>
</reference>
<reference evidence="16" key="4">
    <citation type="journal article" date="2014" name="MBio">
        <title>Estrogen receptor antagonists are anti-cryptococcal agents that directly bind EF hand proteins and synergize with fluconazole in vivo.</title>
        <authorList>
            <person name="Butts A."/>
            <person name="Koselny K."/>
            <person name="Chabrier-Rosello Y."/>
            <person name="Semighini C.P."/>
            <person name="Brown J.C."/>
            <person name="Wang X."/>
            <person name="Annadurai S."/>
            <person name="DiDone L."/>
            <person name="Tabroff J."/>
            <person name="Childers W.E. Jr."/>
            <person name="Abou-Gharbia M."/>
            <person name="Wellington M."/>
            <person name="Cardenas M.E."/>
            <person name="Madhani H.D."/>
            <person name="Heitman J."/>
            <person name="Krysan D.J."/>
        </authorList>
    </citation>
    <scope>SUBCELLULAR LOCATION</scope>
</reference>
<reference evidence="16" key="5">
    <citation type="journal article" date="2016" name="PLoS Pathog.">
        <title>Calcineurin Targets Involved in Stress Survival and Fungal Virulence.</title>
        <authorList>
            <person name="Park H.S."/>
            <person name="Chow E.W."/>
            <person name="Fu C."/>
            <person name="Soderblom E.J."/>
            <person name="Moseley M.A."/>
            <person name="Heitman J."/>
            <person name="Cardenas M.E."/>
        </authorList>
    </citation>
    <scope>SUBCELLULAR LOCATION</scope>
    <scope>DEPHOSPHORYLATION BY CNA1</scope>
    <scope>IDENTIFICATION BY MASS SPECTROMETRY</scope>
    <scope>DISRUPTION PHENOTYPE</scope>
    <scope>PHOSPHORYLATION AT SER-103; SER-288; SER-329; SER-508; SER-569; SER-765 AND SER-810</scope>
    <scope>MUTAGENESIS OF SER-288 AND SER-508</scope>
</reference>
<reference evidence="16" key="6">
    <citation type="journal article" date="2017" name="PLoS Genet.">
        <title>Elucidation of the calcineurin-Crz1 stress response transcriptional network in the human fungal pathogen Cryptococcus neoformans.</title>
        <authorList>
            <person name="Chow E.W."/>
            <person name="Clancey S.A."/>
            <person name="Billmyre R.B."/>
            <person name="Averette A.F."/>
            <person name="Granek J.A."/>
            <person name="Mieczkowski P."/>
            <person name="Cardenas M.E."/>
            <person name="Heitman J."/>
        </authorList>
    </citation>
    <scope>FUNCTION</scope>
    <scope>SUBCELLULAR LOCATION</scope>
    <scope>DISRUPTION PHENOTYPE</scope>
    <scope>MUTAGENESIS OF 451-PRO--GLN-456</scope>
</reference>
<reference evidence="16" key="7">
    <citation type="journal article" date="2017" name="PLoS Genet.">
        <title>Glucosamine stimulates pheromone-independent dimorphic transition in Cryptococcus neoformans by promoting Crz1 nuclear translocation.</title>
        <authorList>
            <person name="Xu X."/>
            <person name="Lin J."/>
            <person name="Zhao Y."/>
            <person name="Kirkman E."/>
            <person name="So Y.S."/>
            <person name="Bahn Y.S."/>
            <person name="Lin X."/>
        </authorList>
    </citation>
    <scope>SUBCELLULAR LOCATION</scope>
    <scope>DISRUPTION PHENOTYPE</scope>
</reference>
<reference evidence="16" key="8">
    <citation type="journal article" date="2018" name="Cell. Microbiol.">
        <title>Cryptococcal dissemination to the central nervous system requires the vacuolar calcium transporter Pmc1.</title>
        <authorList>
            <person name="Squizani E.D."/>
            <person name="Oliveira N.K."/>
            <person name="Reuwsaat J.C.V."/>
            <person name="Marques B.M."/>
            <person name="Lopes W."/>
            <person name="Gerber A.L."/>
            <person name="de Vasconcelos A.T.R."/>
            <person name="Lev S."/>
            <person name="Djordjevic J.T."/>
            <person name="Schrank A."/>
            <person name="Vainstein M.H."/>
            <person name="Staats C.C."/>
            <person name="Kmetzsch L."/>
        </authorList>
    </citation>
    <scope>FUNCTION</scope>
    <scope>DISRUPTION PHENOTYPE</scope>
</reference>
<reference evidence="16" key="9">
    <citation type="journal article" date="2018" name="G3 (Bethesda)">
        <title>Had1 Is Required for Cell Wall Integrity and Fungal Virulence in Cryptococcus neoformans.</title>
        <authorList>
            <person name="Jung W.H."/>
            <person name="Son Y.E."/>
            <person name="Oh S.H."/>
            <person name="Fu C."/>
            <person name="Kim H.S."/>
            <person name="Kwak J.H."/>
            <person name="Cardenas M.E."/>
            <person name="Heitman J."/>
            <person name="Park H.S."/>
        </authorList>
    </citation>
    <scope>DISRUPTION PHENOTYPE</scope>
</reference>
<reference key="10">
    <citation type="journal article" date="2019" name="Genetics">
        <title>Roles for Stress Response and Cell Wall Biosynthesis Pathways in Caspofungin Tolerance in Cryptococcus neoformans.</title>
        <authorList>
            <person name="Pianalto K.M."/>
            <person name="Billmyre R.B."/>
            <person name="Telzrow C.L."/>
            <person name="Alspaugh J.A."/>
        </authorList>
    </citation>
    <scope>SUBCELLULAR LOCATION</scope>
    <scope>DISRUPTION PHENOTYPE</scope>
</reference>
<accession>J9VE33</accession>
<proteinExistence type="evidence at protein level"/>
<comment type="function">
    <text evidence="4 7 14 15">DNA-binding transcriptional activator that interacts with calcineurin-dependent response element (CDRE) promoters (PubMed:28376087). Activates expression of genes required to maintain cell wall integrity during stress (PubMed:23251520, PubMed:28376087). Activates expression of genes required for transepithelial migration through the host blood-brain barrier (PubMed:29113016). Required for adaptation to host temperature during infection (PubMed:28376087).</text>
</comment>
<comment type="subcellular location">
    <subcellularLocation>
        <location evidence="4 6 7 8 11">Cytoplasm</location>
        <location evidence="4 6 7 8 11">Cytosol</location>
    </subcellularLocation>
    <subcellularLocation>
        <location evidence="3 4 5 6 7 8 11">Nucleus</location>
    </subcellularLocation>
    <text evidence="3 4 5 6 7 8 11">Localizes to the nucleus during calcium signaling, cell wall and heat stress (PubMed:21487010, PubMed:23251520, PubMed:24520056, PubMed:27611567, PubMed:28376087, PubMed:28898238, PubMed:31266771). Localizes to the nucleus following dephosphorylation by CNA1 (calcineurin) (PubMed:27611567). Localizes to the nucleus during growth on glucosamine carbon source (PubMed:28898238). Localizes to the cytosol during vegetative growth and osmotic stress (PubMed:23251520, PubMed:28376087, PubMed:28898238).</text>
</comment>
<comment type="induction">
    <text evidence="3">Induced during glucose starvation.</text>
</comment>
<comment type="PTM">
    <text evidence="3 6">Phosphorylated (PubMed:21487010, PubMed:27611567). Dephosphorylated by calcineurin (CNA1) which promotes nuclear localization (PubMed:27611567).</text>
</comment>
<comment type="disruption phenotype">
    <text evidence="3 4 6 7 8 9 10 11">Decreases virulence in a mouse intranasal inhalation model and intravenous model for infection (PubMed:21487010, PubMed:27611567, PubMed:28376087, PubMed:29233914). Decreases virulence in a moth model (PubMed:28376087). Decreases urease activity (PubMed:29113016). Decreases levels of: laccase and melanin (PubMed:21487010). Hypercapsular with mucoid colony morphology (PubMed:21487010). Sensitive to: calcium; lithium; sodium nitrite; high temperature; sodium dodecyl sulfate (cell wall stress inducer); Calcofluor White (cell wall stress inducer); Congo Red (cell wall stress inducer); caspofungin (cell wall stress inducer) (PubMed:21487010, PubMed:27611567, PubMed:28376087, PubMed:29233914, PubMed:31266771). Abolishes filamentation during growth on glucosamine carbon source (PubMed:28898238). Decreases RNA level of genes involved in membrane transport, carbohydrate metabolism, signaling, DNA replication, and sterol biosynthesis during heat stress (PubMed:28376087). Decreases CHS5 and CHS6 RNA level during heat stress (PubMed:27611567, PubMed:28376087). Decreases RNA level of ZNF2 during growth on glucosamine carbon source (PubMed:28898238). Increases MFalpha1 expression during mating (PubMed:27611567). Normal hyphal morphology during mating (PubMed:23251520, PubMed:28376087). Simultaneous disruption of HAD1, PUF4 or LHP1 results in phenotypic enhancement (PubMed:27611567, PubMed:29233914).</text>
</comment>
<organism evidence="18">
    <name type="scientific">Cryptococcus neoformans var. grubii serotype A (strain H99 / ATCC 208821 / CBS 10515 / FGSC 9487)</name>
    <name type="common">Filobasidiella neoformans var. grubii</name>
    <dbReference type="NCBI Taxonomy" id="235443"/>
    <lineage>
        <taxon>Eukaryota</taxon>
        <taxon>Fungi</taxon>
        <taxon>Dikarya</taxon>
        <taxon>Basidiomycota</taxon>
        <taxon>Agaricomycotina</taxon>
        <taxon>Tremellomycetes</taxon>
        <taxon>Tremellales</taxon>
        <taxon>Cryptococcaceae</taxon>
        <taxon>Cryptococcus</taxon>
        <taxon>Cryptococcus neoformans species complex</taxon>
    </lineage>
</organism>
<sequence>MADPASPPSFDAIFAQQPVRRSSSTSTSSFANYTYSALQQHQQFNSDAPLVDEPQSLSEQARKQQRDPSKDGNNKRYLDMMSGLADGYGVINGRRQESLRKESLPFNPQEDSTLIATAPKRGERNGLGRNGYSSPIGDIMFGPEQTIPNQPQQPSQQPPWGEGRMSEQSVHYASVQQPQYSSFQSSGPGAGSAGIDYLPRGTTSSMNDSMLSSQISPYLNHDVASEGQPPQQQQQQQQQQQGEWGQEFIGVEQQQQYAQGEGQSNGMEDMLTMGDESPFESELQRVISNTSHPSQYPSRTSSPFPQQSQSNMVPASTVNQTRTESFPASRSPSPFAPQQASQTEASNHVVSTPSMGQPTYPRASSSPRTNPNSPFFNKPQSPPALIIPNSPVLPNIVTQSTSNNHSKGLNQPHTRHASNGAGGLFPPSNPALEHLTGMAGISPIAPNADGPMICIQPSTPISGLKEGRGLFDAALRRAGAARGAQRQGPQGQGESQEDRRQDGFNVPSPQSHPLPRTLSSDQVNQGVEMQGMDFAAQMQSYEQQGWANDTLRIAGPSRPRAKSDSIIPSPTADSFDRQAFLAFIGAGNAQPPPPNVEMQPGYVDVSEQWRNTVSAWKAGLGEGELNSQPTLDPRLLPGRESNEAVYQQLLMQQQTGQMPRLDPDQLHQLTQLEGQRARFSLNTNIAPPKYEPGEISPTSMVFYQSMGLYPHAAPELSGTVSAPWSQTAFGQVPGPGPVGHPATAGPAQQHFLTPTLSHATVRRRSFGGGEHPAMGAGTPGYGMEFSSPFAGKSVGQIRGVNMGHRRAARSEDFGRGGTGWGVGAGGSTAEFLQSITGDDGSLLPPSNRGHAMSHSRHSSTSSIRSASPALSISSQGSSFSHHSPRMDMPDSIYPGHPIIAPATPLQVSGLYEEQQTPARVAKMKVTSVATEVASTSRRTNSGIFKCPVPGCGSTFTRHFNLKGHLRSHNDERPFKCLYEGCPKAIVGFARQHDCKRHMLLHEGLRLFECEGCGKKFARLDALTRHHKSEQGQECAITHPLPTNFDGSPMSESQYKTYKGIKSTPEGSGRRLSSTASGSGSGKRRSKKSETSEED</sequence>
<dbReference type="EMBL" id="CP003820">
    <property type="protein sequence ID" value="AFR92293.1"/>
    <property type="molecule type" value="Genomic_DNA"/>
</dbReference>
<dbReference type="EMBL" id="CP003820">
    <property type="protein sequence ID" value="AGV15273.1"/>
    <property type="molecule type" value="Genomic_DNA"/>
</dbReference>
<dbReference type="RefSeq" id="XP_012046570.1">
    <property type="nucleotide sequence ID" value="XM_012191180.1"/>
</dbReference>
<dbReference type="RefSeq" id="XP_012046571.1">
    <property type="nucleotide sequence ID" value="XM_012191181.1"/>
</dbReference>
<dbReference type="iPTMnet" id="J9VE33"/>
<dbReference type="GeneID" id="23884019"/>
<dbReference type="KEGG" id="cng:CNAG_00156"/>
<dbReference type="VEuPathDB" id="FungiDB:CNAG_00156"/>
<dbReference type="HOGENOM" id="CLU_284407_0_0_1"/>
<dbReference type="OrthoDB" id="5849at5206"/>
<dbReference type="PHI-base" id="PHI:2424"/>
<dbReference type="PHI-base" id="PHI:7868"/>
<dbReference type="Proteomes" id="UP000010091">
    <property type="component" value="Chromosome 1"/>
</dbReference>
<dbReference type="GO" id="GO:0000785">
    <property type="term" value="C:chromatin"/>
    <property type="evidence" value="ECO:0000314"/>
    <property type="project" value="UniProtKB"/>
</dbReference>
<dbReference type="GO" id="GO:0005829">
    <property type="term" value="C:cytosol"/>
    <property type="evidence" value="ECO:0000314"/>
    <property type="project" value="UniProtKB"/>
</dbReference>
<dbReference type="GO" id="GO:0005634">
    <property type="term" value="C:nucleus"/>
    <property type="evidence" value="ECO:0000314"/>
    <property type="project" value="UniProtKB"/>
</dbReference>
<dbReference type="GO" id="GO:0001228">
    <property type="term" value="F:DNA-binding transcription activator activity, RNA polymerase II-specific"/>
    <property type="evidence" value="ECO:0000315"/>
    <property type="project" value="UniProtKB"/>
</dbReference>
<dbReference type="GO" id="GO:0000978">
    <property type="term" value="F:RNA polymerase II cis-regulatory region sequence-specific DNA binding"/>
    <property type="evidence" value="ECO:0000314"/>
    <property type="project" value="UniProtKB"/>
</dbReference>
<dbReference type="GO" id="GO:0008270">
    <property type="term" value="F:zinc ion binding"/>
    <property type="evidence" value="ECO:0007669"/>
    <property type="project" value="UniProtKB-KW"/>
</dbReference>
<dbReference type="GO" id="GO:0097720">
    <property type="term" value="P:calcineurin-mediated signaling"/>
    <property type="evidence" value="ECO:0000315"/>
    <property type="project" value="UniProtKB"/>
</dbReference>
<dbReference type="GO" id="GO:0045944">
    <property type="term" value="P:positive regulation of transcription by RNA polymerase II"/>
    <property type="evidence" value="ECO:0000315"/>
    <property type="project" value="UniProtKB"/>
</dbReference>
<dbReference type="GO" id="GO:0140471">
    <property type="term" value="P:positive regulation of transepithelial migration of symbiont in host"/>
    <property type="evidence" value="ECO:0000315"/>
    <property type="project" value="UniProtKB"/>
</dbReference>
<dbReference type="GO" id="GO:0060237">
    <property type="term" value="P:regulation of fungal-type cell wall organization"/>
    <property type="evidence" value="ECO:0000315"/>
    <property type="project" value="UniProtKB"/>
</dbReference>
<dbReference type="FunFam" id="3.30.160.60:FF:000032">
    <property type="entry name" value="Krueppel-like factor 4"/>
    <property type="match status" value="1"/>
</dbReference>
<dbReference type="Gene3D" id="3.30.160.60">
    <property type="entry name" value="Classic Zinc Finger"/>
    <property type="match status" value="3"/>
</dbReference>
<dbReference type="InterPro" id="IPR050329">
    <property type="entry name" value="GLI_C2H2-zinc-finger"/>
</dbReference>
<dbReference type="InterPro" id="IPR036236">
    <property type="entry name" value="Znf_C2H2_sf"/>
</dbReference>
<dbReference type="InterPro" id="IPR013087">
    <property type="entry name" value="Znf_C2H2_type"/>
</dbReference>
<dbReference type="PANTHER" id="PTHR19818:SF139">
    <property type="entry name" value="PAIR-RULE PROTEIN ODD-PAIRED"/>
    <property type="match status" value="1"/>
</dbReference>
<dbReference type="PANTHER" id="PTHR19818">
    <property type="entry name" value="ZINC FINGER PROTEIN ZIC AND GLI"/>
    <property type="match status" value="1"/>
</dbReference>
<dbReference type="Pfam" id="PF00096">
    <property type="entry name" value="zf-C2H2"/>
    <property type="match status" value="2"/>
</dbReference>
<dbReference type="SMART" id="SM00355">
    <property type="entry name" value="ZnF_C2H2"/>
    <property type="match status" value="3"/>
</dbReference>
<dbReference type="SUPFAM" id="SSF57667">
    <property type="entry name" value="beta-beta-alpha zinc fingers"/>
    <property type="match status" value="2"/>
</dbReference>
<dbReference type="PROSITE" id="PS00028">
    <property type="entry name" value="ZINC_FINGER_C2H2_1"/>
    <property type="match status" value="1"/>
</dbReference>
<dbReference type="PROSITE" id="PS50157">
    <property type="entry name" value="ZINC_FINGER_C2H2_2"/>
    <property type="match status" value="2"/>
</dbReference>